<reference key="1">
    <citation type="submission" date="2007-02" db="EMBL/GenBank/DDBJ databases">
        <title>Complete sequence of Clostridium thermocellum ATCC 27405.</title>
        <authorList>
            <consortium name="US DOE Joint Genome Institute"/>
            <person name="Copeland A."/>
            <person name="Lucas S."/>
            <person name="Lapidus A."/>
            <person name="Barry K."/>
            <person name="Detter J.C."/>
            <person name="Glavina del Rio T."/>
            <person name="Hammon N."/>
            <person name="Israni S."/>
            <person name="Dalin E."/>
            <person name="Tice H."/>
            <person name="Pitluck S."/>
            <person name="Chertkov O."/>
            <person name="Brettin T."/>
            <person name="Bruce D."/>
            <person name="Han C."/>
            <person name="Tapia R."/>
            <person name="Gilna P."/>
            <person name="Schmutz J."/>
            <person name="Larimer F."/>
            <person name="Land M."/>
            <person name="Hauser L."/>
            <person name="Kyrpides N."/>
            <person name="Mikhailova N."/>
            <person name="Wu J.H.D."/>
            <person name="Newcomb M."/>
            <person name="Richardson P."/>
        </authorList>
    </citation>
    <scope>NUCLEOTIDE SEQUENCE [LARGE SCALE GENOMIC DNA]</scope>
    <source>
        <strain>ATCC 27405 / DSM 1237 / JCM 9322 / NBRC 103400 / NCIMB 10682 / NRRL B-4536 / VPI 7372</strain>
    </source>
</reference>
<sequence length="145" mass="16224">MLMPKRVKHRKVQRGRMKGVATRGNKVVHGDYGLQALEPAWITSNQIEAARIAMTRFIKRGGKVWIKIFPDKPVTKKPAETRMGSGKGSPEYWVAVVKPGRVLFEIAGVSEEVAREALRLAMHKLPIKCKFVAREDEMGGEANES</sequence>
<dbReference type="EMBL" id="CP000568">
    <property type="protein sequence ID" value="ABN54108.1"/>
    <property type="molecule type" value="Genomic_DNA"/>
</dbReference>
<dbReference type="RefSeq" id="WP_003514637.1">
    <property type="nucleotide sequence ID" value="NC_009012.1"/>
</dbReference>
<dbReference type="SMR" id="A3DJH9"/>
<dbReference type="STRING" id="203119.Cthe_2910"/>
<dbReference type="GeneID" id="35803963"/>
<dbReference type="KEGG" id="cth:Cthe_2910"/>
<dbReference type="eggNOG" id="COG0197">
    <property type="taxonomic scope" value="Bacteria"/>
</dbReference>
<dbReference type="HOGENOM" id="CLU_078858_2_1_9"/>
<dbReference type="OrthoDB" id="9802589at2"/>
<dbReference type="Proteomes" id="UP000002145">
    <property type="component" value="Chromosome"/>
</dbReference>
<dbReference type="GO" id="GO:0022625">
    <property type="term" value="C:cytosolic large ribosomal subunit"/>
    <property type="evidence" value="ECO:0007669"/>
    <property type="project" value="TreeGrafter"/>
</dbReference>
<dbReference type="GO" id="GO:0019843">
    <property type="term" value="F:rRNA binding"/>
    <property type="evidence" value="ECO:0007669"/>
    <property type="project" value="UniProtKB-UniRule"/>
</dbReference>
<dbReference type="GO" id="GO:0003735">
    <property type="term" value="F:structural constituent of ribosome"/>
    <property type="evidence" value="ECO:0007669"/>
    <property type="project" value="InterPro"/>
</dbReference>
<dbReference type="GO" id="GO:0000049">
    <property type="term" value="F:tRNA binding"/>
    <property type="evidence" value="ECO:0007669"/>
    <property type="project" value="UniProtKB-KW"/>
</dbReference>
<dbReference type="GO" id="GO:0006412">
    <property type="term" value="P:translation"/>
    <property type="evidence" value="ECO:0007669"/>
    <property type="project" value="UniProtKB-UniRule"/>
</dbReference>
<dbReference type="CDD" id="cd01433">
    <property type="entry name" value="Ribosomal_L16_L10e"/>
    <property type="match status" value="1"/>
</dbReference>
<dbReference type="FunFam" id="3.90.1170.10:FF:000001">
    <property type="entry name" value="50S ribosomal protein L16"/>
    <property type="match status" value="1"/>
</dbReference>
<dbReference type="Gene3D" id="3.90.1170.10">
    <property type="entry name" value="Ribosomal protein L10e/L16"/>
    <property type="match status" value="1"/>
</dbReference>
<dbReference type="HAMAP" id="MF_01342">
    <property type="entry name" value="Ribosomal_uL16"/>
    <property type="match status" value="1"/>
</dbReference>
<dbReference type="InterPro" id="IPR047873">
    <property type="entry name" value="Ribosomal_uL16"/>
</dbReference>
<dbReference type="InterPro" id="IPR000114">
    <property type="entry name" value="Ribosomal_uL16_bact-type"/>
</dbReference>
<dbReference type="InterPro" id="IPR020798">
    <property type="entry name" value="Ribosomal_uL16_CS"/>
</dbReference>
<dbReference type="InterPro" id="IPR016180">
    <property type="entry name" value="Ribosomal_uL16_dom"/>
</dbReference>
<dbReference type="InterPro" id="IPR036920">
    <property type="entry name" value="Ribosomal_uL16_sf"/>
</dbReference>
<dbReference type="NCBIfam" id="TIGR01164">
    <property type="entry name" value="rplP_bact"/>
    <property type="match status" value="1"/>
</dbReference>
<dbReference type="PANTHER" id="PTHR12220">
    <property type="entry name" value="50S/60S RIBOSOMAL PROTEIN L16"/>
    <property type="match status" value="1"/>
</dbReference>
<dbReference type="PANTHER" id="PTHR12220:SF13">
    <property type="entry name" value="LARGE RIBOSOMAL SUBUNIT PROTEIN UL16M"/>
    <property type="match status" value="1"/>
</dbReference>
<dbReference type="Pfam" id="PF00252">
    <property type="entry name" value="Ribosomal_L16"/>
    <property type="match status" value="1"/>
</dbReference>
<dbReference type="PRINTS" id="PR00060">
    <property type="entry name" value="RIBOSOMALL16"/>
</dbReference>
<dbReference type="SUPFAM" id="SSF54686">
    <property type="entry name" value="Ribosomal protein L16p/L10e"/>
    <property type="match status" value="1"/>
</dbReference>
<dbReference type="PROSITE" id="PS00586">
    <property type="entry name" value="RIBOSOMAL_L16_1"/>
    <property type="match status" value="1"/>
</dbReference>
<dbReference type="PROSITE" id="PS00701">
    <property type="entry name" value="RIBOSOMAL_L16_2"/>
    <property type="match status" value="1"/>
</dbReference>
<name>RL16_ACET2</name>
<feature type="chain" id="PRO_1000054612" description="Large ribosomal subunit protein uL16">
    <location>
        <begin position="1"/>
        <end position="145"/>
    </location>
</feature>
<feature type="region of interest" description="Disordered" evidence="2">
    <location>
        <begin position="1"/>
        <end position="20"/>
    </location>
</feature>
<feature type="compositionally biased region" description="Basic residues" evidence="2">
    <location>
        <begin position="1"/>
        <end position="17"/>
    </location>
</feature>
<keyword id="KW-1185">Reference proteome</keyword>
<keyword id="KW-0687">Ribonucleoprotein</keyword>
<keyword id="KW-0689">Ribosomal protein</keyword>
<keyword id="KW-0694">RNA-binding</keyword>
<keyword id="KW-0699">rRNA-binding</keyword>
<keyword id="KW-0820">tRNA-binding</keyword>
<accession>A3DJH9</accession>
<organism>
    <name type="scientific">Acetivibrio thermocellus (strain ATCC 27405 / DSM 1237 / JCM 9322 / NBRC 103400 / NCIMB 10682 / NRRL B-4536 / VPI 7372)</name>
    <name type="common">Clostridium thermocellum</name>
    <dbReference type="NCBI Taxonomy" id="203119"/>
    <lineage>
        <taxon>Bacteria</taxon>
        <taxon>Bacillati</taxon>
        <taxon>Bacillota</taxon>
        <taxon>Clostridia</taxon>
        <taxon>Eubacteriales</taxon>
        <taxon>Oscillospiraceae</taxon>
        <taxon>Acetivibrio</taxon>
    </lineage>
</organism>
<proteinExistence type="inferred from homology"/>
<gene>
    <name evidence="1" type="primary">rplP</name>
    <name type="ordered locus">Cthe_2910</name>
</gene>
<comment type="function">
    <text evidence="1">Binds 23S rRNA and is also seen to make contacts with the A and possibly P site tRNAs.</text>
</comment>
<comment type="subunit">
    <text evidence="1">Part of the 50S ribosomal subunit.</text>
</comment>
<comment type="similarity">
    <text evidence="1">Belongs to the universal ribosomal protein uL16 family.</text>
</comment>
<protein>
    <recommendedName>
        <fullName evidence="1">Large ribosomal subunit protein uL16</fullName>
    </recommendedName>
    <alternativeName>
        <fullName evidence="3">50S ribosomal protein L16</fullName>
    </alternativeName>
</protein>
<evidence type="ECO:0000255" key="1">
    <source>
        <dbReference type="HAMAP-Rule" id="MF_01342"/>
    </source>
</evidence>
<evidence type="ECO:0000256" key="2">
    <source>
        <dbReference type="SAM" id="MobiDB-lite"/>
    </source>
</evidence>
<evidence type="ECO:0000305" key="3"/>